<evidence type="ECO:0000250" key="1">
    <source>
        <dbReference type="UniProtKB" id="P00430"/>
    </source>
</evidence>
<evidence type="ECO:0000250" key="2">
    <source>
        <dbReference type="UniProtKB" id="P04039"/>
    </source>
</evidence>
<evidence type="ECO:0000250" key="3">
    <source>
        <dbReference type="UniProtKB" id="P15954"/>
    </source>
</evidence>
<evidence type="ECO:0000250" key="4">
    <source>
        <dbReference type="UniProtKB" id="P17665"/>
    </source>
</evidence>
<evidence type="ECO:0000305" key="5"/>
<proteinExistence type="inferred from homology"/>
<accession>P61638</accession>
<sequence>MLGQSIRRFTTSVVRRSHYEEGPGKNLPFSVENKWSLLAKMCLYFGSAFATPFLVVRHQLLKT</sequence>
<keyword id="KW-0007">Acetylation</keyword>
<keyword id="KW-0472">Membrane</keyword>
<keyword id="KW-0496">Mitochondrion</keyword>
<keyword id="KW-0999">Mitochondrion inner membrane</keyword>
<keyword id="KW-1185">Reference proteome</keyword>
<keyword id="KW-0809">Transit peptide</keyword>
<keyword id="KW-0812">Transmembrane</keyword>
<keyword id="KW-1133">Transmembrane helix</keyword>
<comment type="function">
    <text evidence="2">Component of the cytochrome c oxidase, the last enzyme in the mitochondrial electron transport chain which drives oxidative phosphorylation. The respiratory chain contains 3 multisubunit complexes succinate dehydrogenase (complex II, CII), ubiquinol-cytochrome c oxidoreductase (cytochrome b-c1 complex, complex III, CIII) and cytochrome c oxidase (complex IV, CIV), that cooperate to transfer electrons derived from NADH and succinate to molecular oxygen, creating an electrochemical gradient over the inner membrane that drives transmembrane transport and the ATP synthase. Cytochrome c oxidase is the component of the respiratory chain that catalyzes the reduction of oxygen to water. Electrons originating from reduced cytochrome c in the intermembrane space (IMS) are transferred via the dinuclear copper A center (CU(A)) of subunit 2 and heme A of subunit 1 to the active site in subunit 1, a binuclear center (BNC) formed by heme A3 and copper B (CU(B)). The BNC reduces molecular oxygen to 2 water molecules using 4 electrons from cytochrome c in the IMS and 4 protons from the mitochondrial matrix.</text>
</comment>
<comment type="pathway">
    <text evidence="2">Energy metabolism; oxidative phosphorylation.</text>
</comment>
<comment type="subunit">
    <text evidence="1 3">Component of the cytochrome c oxidase (complex IV, CIV), a multisubunit enzyme composed of 14 subunits. The complex is composed of a catalytic core of 3 subunits MT-CO1, MT-CO2 and MT-CO3, encoded in the mitochondrial DNA, and 11 supernumerary subunits COX4I, COX5A, COX5B, COX6A, COX6B, COX6C, COX7A, COX7B, COX7C, COX8 and NDUFA4, which are encoded in the nuclear genome. The complex exists as a monomer or a dimer and forms supercomplexes (SCs) in the inner mitochondrial membrane with NADH-ubiquinone oxidoreductase (complex I, CI) and ubiquinol-cytochrome c oxidoreductase (cytochrome b-c1 complex, complex III, CIII), resulting in different assemblies (supercomplex SCI(1)III(2)IV(1) and megacomplex MCI(2)III(2)IV(2)) (By similarity). Interacts with RAB5IF (By similarity).</text>
</comment>
<comment type="subcellular location">
    <subcellularLocation>
        <location evidence="1">Mitochondrion inner membrane</location>
        <topology evidence="1">Single-pass membrane protein</topology>
    </subcellularLocation>
</comment>
<comment type="similarity">
    <text evidence="5">Belongs to the cytochrome c oxidase VIIc family.</text>
</comment>
<protein>
    <recommendedName>
        <fullName>Cytochrome c oxidase subunit 7C, mitochondrial</fullName>
    </recommendedName>
    <alternativeName>
        <fullName>Cytochrome c oxidase polypeptide VIIc</fullName>
    </alternativeName>
</protein>
<feature type="transit peptide" description="Mitochondrion" evidence="1">
    <location>
        <begin position="1"/>
        <end position="16"/>
    </location>
</feature>
<feature type="chain" id="PRO_0000006163" description="Cytochrome c oxidase subunit 7C, mitochondrial">
    <location>
        <begin position="17"/>
        <end position="63"/>
    </location>
</feature>
<feature type="topological domain" description="Mitochondrial matrix" evidence="1">
    <location>
        <begin position="17"/>
        <end position="33"/>
    </location>
</feature>
<feature type="transmembrane region" description="Helical" evidence="1">
    <location>
        <begin position="34"/>
        <end position="60"/>
    </location>
</feature>
<feature type="topological domain" description="Mitochondrial intermembrane" evidence="1">
    <location>
        <begin position="61"/>
        <end position="63"/>
    </location>
</feature>
<feature type="modified residue" description="N6-acetyllysine; alternate" evidence="4">
    <location>
        <position position="25"/>
    </location>
</feature>
<feature type="modified residue" description="N6-succinyllysine; alternate" evidence="4">
    <location>
        <position position="25"/>
    </location>
</feature>
<reference key="1">
    <citation type="journal article" date="2002" name="Genomics">
        <title>Search for genes positively selected during primate evolution by 5'-end-sequence screening of cynomolgus monkey cDNAs.</title>
        <authorList>
            <person name="Osada N."/>
            <person name="Kusuda J."/>
            <person name="Hirata M."/>
            <person name="Tanuma R."/>
            <person name="Hida M."/>
            <person name="Sugano S."/>
            <person name="Hirai M."/>
            <person name="Hashimoto K."/>
        </authorList>
    </citation>
    <scope>NUCLEOTIDE SEQUENCE [GENOMIC DNA]</scope>
</reference>
<gene>
    <name type="primary">COX7C</name>
</gene>
<name>COX7C_GORGO</name>
<dbReference type="EMBL" id="AB072317">
    <property type="protein sequence ID" value="BAB86873.1"/>
    <property type="molecule type" value="Genomic_DNA"/>
</dbReference>
<dbReference type="SMR" id="P61638"/>
<dbReference type="FunCoup" id="P61638">
    <property type="interactions" value="825"/>
</dbReference>
<dbReference type="STRING" id="9593.ENSGGOP00000012085"/>
<dbReference type="Ensembl" id="ENSGGOT00000012432.3">
    <property type="protein sequence ID" value="ENSGGOP00000012085.2"/>
    <property type="gene ID" value="ENSGGOG00000012393.3"/>
</dbReference>
<dbReference type="GeneID" id="101133649"/>
<dbReference type="KEGG" id="ggo:101133649"/>
<dbReference type="eggNOG" id="KOG4527">
    <property type="taxonomic scope" value="Eukaryota"/>
</dbReference>
<dbReference type="GeneTree" id="ENSGT00390000018086"/>
<dbReference type="HOGENOM" id="CLU_194769_0_0_1"/>
<dbReference type="InParanoid" id="P61638"/>
<dbReference type="OMA" id="AIRRAHY"/>
<dbReference type="OrthoDB" id="677at9604"/>
<dbReference type="UniPathway" id="UPA00705"/>
<dbReference type="Proteomes" id="UP000001519">
    <property type="component" value="Chromosome 5"/>
</dbReference>
<dbReference type="Bgee" id="ENSGGOG00000012393">
    <property type="expression patterns" value="Expressed in heart and 6 other cell types or tissues"/>
</dbReference>
<dbReference type="GO" id="GO:0005743">
    <property type="term" value="C:mitochondrial inner membrane"/>
    <property type="evidence" value="ECO:0007669"/>
    <property type="project" value="UniProtKB-SubCell"/>
</dbReference>
<dbReference type="GO" id="GO:0045277">
    <property type="term" value="C:respiratory chain complex IV"/>
    <property type="evidence" value="ECO:0007669"/>
    <property type="project" value="InterPro"/>
</dbReference>
<dbReference type="GO" id="GO:0006123">
    <property type="term" value="P:mitochondrial electron transport, cytochrome c to oxygen"/>
    <property type="evidence" value="ECO:0000318"/>
    <property type="project" value="GO_Central"/>
</dbReference>
<dbReference type="CDD" id="cd00929">
    <property type="entry name" value="Cyt_c_Oxidase_VIIc"/>
    <property type="match status" value="1"/>
</dbReference>
<dbReference type="FunFam" id="4.10.49.10:FF:000001">
    <property type="entry name" value="Cytochrome c oxidase subunit 7C"/>
    <property type="match status" value="1"/>
</dbReference>
<dbReference type="Gene3D" id="4.10.49.10">
    <property type="entry name" value="Cytochrome c oxidase subunit VIIc"/>
    <property type="match status" value="1"/>
</dbReference>
<dbReference type="InterPro" id="IPR004202">
    <property type="entry name" value="COX7C/Cox8"/>
</dbReference>
<dbReference type="InterPro" id="IPR036636">
    <property type="entry name" value="COX7C/Cox8_sf"/>
</dbReference>
<dbReference type="PANTHER" id="PTHR13313:SF1">
    <property type="entry name" value="CYTOCHROME C OXIDASE SUBUNIT 7C, MITOCHONDRIAL"/>
    <property type="match status" value="1"/>
</dbReference>
<dbReference type="PANTHER" id="PTHR13313">
    <property type="entry name" value="CYTOCHROME C OXIDASE SUBUNIT VIIC"/>
    <property type="match status" value="1"/>
</dbReference>
<dbReference type="Pfam" id="PF02935">
    <property type="entry name" value="COX7C"/>
    <property type="match status" value="1"/>
</dbReference>
<dbReference type="SUPFAM" id="SSF81427">
    <property type="entry name" value="Mitochondrial cytochrome c oxidase subunit VIIc (aka VIIIa)"/>
    <property type="match status" value="1"/>
</dbReference>
<organism>
    <name type="scientific">Gorilla gorilla gorilla</name>
    <name type="common">Western lowland gorilla</name>
    <dbReference type="NCBI Taxonomy" id="9595"/>
    <lineage>
        <taxon>Eukaryota</taxon>
        <taxon>Metazoa</taxon>
        <taxon>Chordata</taxon>
        <taxon>Craniata</taxon>
        <taxon>Vertebrata</taxon>
        <taxon>Euteleostomi</taxon>
        <taxon>Mammalia</taxon>
        <taxon>Eutheria</taxon>
        <taxon>Euarchontoglires</taxon>
        <taxon>Primates</taxon>
        <taxon>Haplorrhini</taxon>
        <taxon>Catarrhini</taxon>
        <taxon>Hominidae</taxon>
        <taxon>Gorilla</taxon>
    </lineage>
</organism>